<protein>
    <recommendedName>
        <fullName>Signal transducer and activator of transcription 3</fullName>
    </recommendedName>
</protein>
<feature type="chain" id="PRO_0000347217" description="Signal transducer and activator of transcription 3">
    <location>
        <begin position="1"/>
        <end position="771"/>
    </location>
</feature>
<feature type="domain" description="SH2" evidence="3">
    <location>
        <begin position="580"/>
        <end position="670"/>
    </location>
</feature>
<feature type="short sequence motif" description="Essential for nuclear import" evidence="1">
    <location>
        <begin position="150"/>
        <end position="162"/>
    </location>
</feature>
<feature type="modified residue" description="Phosphotyrosine" evidence="4">
    <location>
        <position position="706"/>
    </location>
</feature>
<feature type="sequence conflict" description="In Ref. 1; AAT64887." evidence="5" ref="1">
    <original>S</original>
    <variation>G</variation>
    <location>
        <position position="23"/>
    </location>
</feature>
<feature type="sequence conflict" description="In Ref. 1; AAT64887." evidence="5" ref="1">
    <original>I</original>
    <variation>F</variation>
    <location>
        <position position="339"/>
    </location>
</feature>
<feature type="sequence conflict" description="In Ref. 2; CAH65453." evidence="5" ref="2">
    <location>
        <position position="542"/>
    </location>
</feature>
<dbReference type="EMBL" id="AY641397">
    <property type="protein sequence ID" value="AAT64887.1"/>
    <property type="molecule type" value="mRNA"/>
</dbReference>
<dbReference type="EMBL" id="AJ851819">
    <property type="protein sequence ID" value="CAH65453.1"/>
    <property type="molecule type" value="mRNA"/>
</dbReference>
<dbReference type="RefSeq" id="NP_001026102.2">
    <property type="nucleotide sequence ID" value="NM_001030931.4"/>
</dbReference>
<dbReference type="RefSeq" id="NP_001385252.1">
    <property type="nucleotide sequence ID" value="NM_001398323.1"/>
</dbReference>
<dbReference type="RefSeq" id="XP_015155084.1">
    <property type="nucleotide sequence ID" value="XM_015299598.1"/>
</dbReference>
<dbReference type="RefSeq" id="XP_015155085.1">
    <property type="nucleotide sequence ID" value="XM_015299599.1"/>
</dbReference>
<dbReference type="RefSeq" id="XP_040509098.1">
    <property type="nucleotide sequence ID" value="XM_040653164.2"/>
</dbReference>
<dbReference type="RefSeq" id="XP_046789320.1">
    <property type="nucleotide sequence ID" value="XM_046933364.1"/>
</dbReference>
<dbReference type="SMR" id="Q6DV79"/>
<dbReference type="FunCoup" id="Q6DV79">
    <property type="interactions" value="1812"/>
</dbReference>
<dbReference type="STRING" id="9031.ENSGALP00000005161"/>
<dbReference type="iPTMnet" id="Q6DV79"/>
<dbReference type="PaxDb" id="9031-ENSGALP00000005161"/>
<dbReference type="GeneID" id="420027"/>
<dbReference type="KEGG" id="gga:420027"/>
<dbReference type="CTD" id="6774"/>
<dbReference type="VEuPathDB" id="HostDB:geneid_420027"/>
<dbReference type="eggNOG" id="KOG3667">
    <property type="taxonomic scope" value="Eukaryota"/>
</dbReference>
<dbReference type="HOGENOM" id="CLU_014189_3_0_1"/>
<dbReference type="InParanoid" id="Q6DV79"/>
<dbReference type="OMA" id="DCANSPM"/>
<dbReference type="OrthoDB" id="19300at2759"/>
<dbReference type="PhylomeDB" id="Q6DV79"/>
<dbReference type="Reactome" id="R-GGA-1059683">
    <property type="pathway name" value="Interleukin-6 signaling"/>
</dbReference>
<dbReference type="Reactome" id="R-GGA-1266695">
    <property type="pathway name" value="Interleukin-7 signaling"/>
</dbReference>
<dbReference type="Reactome" id="R-GGA-1433557">
    <property type="pathway name" value="Signaling by SCF-KIT"/>
</dbReference>
<dbReference type="Reactome" id="R-GGA-186763">
    <property type="pathway name" value="Downstream signal transduction"/>
</dbReference>
<dbReference type="Reactome" id="R-GGA-201556">
    <property type="pathway name" value="Signaling by ALK"/>
</dbReference>
<dbReference type="Reactome" id="R-GGA-6783783">
    <property type="pathway name" value="Interleukin-10 signaling"/>
</dbReference>
<dbReference type="Reactome" id="R-GGA-6785807">
    <property type="pathway name" value="Interleukin-4 and Interleukin-13 signaling"/>
</dbReference>
<dbReference type="Reactome" id="R-GGA-8854691">
    <property type="pathway name" value="Interleukin-20 family signaling"/>
</dbReference>
<dbReference type="Reactome" id="R-GGA-8875791">
    <property type="pathway name" value="MET activates STAT3"/>
</dbReference>
<dbReference type="Reactome" id="R-GGA-8983432">
    <property type="pathway name" value="Interleukin-15 signaling"/>
</dbReference>
<dbReference type="Reactome" id="R-GGA-8984722">
    <property type="pathway name" value="Interleukin-35 Signalling"/>
</dbReference>
<dbReference type="Reactome" id="R-GGA-8985947">
    <property type="pathway name" value="Interleukin-9 signaling"/>
</dbReference>
<dbReference type="Reactome" id="R-GGA-9008059">
    <property type="pathway name" value="Interleukin-37 signaling"/>
</dbReference>
<dbReference type="Reactome" id="R-GGA-9020933">
    <property type="pathway name" value="Interleukin-23 signaling"/>
</dbReference>
<dbReference type="Reactome" id="R-GGA-9020956">
    <property type="pathway name" value="Interleukin-27 signaling"/>
</dbReference>
<dbReference type="Reactome" id="R-GGA-9020958">
    <property type="pathway name" value="Interleukin-21 signaling"/>
</dbReference>
<dbReference type="Reactome" id="R-GGA-9701898">
    <property type="pathway name" value="STAT3 nuclear events downstream of ALK signaling"/>
</dbReference>
<dbReference type="Reactome" id="R-GGA-9833482">
    <property type="pathway name" value="PKR-mediated signaling"/>
</dbReference>
<dbReference type="PRO" id="PR:Q6DV79"/>
<dbReference type="Proteomes" id="UP000000539">
    <property type="component" value="Chromosome 27"/>
</dbReference>
<dbReference type="Bgee" id="ENSGALG00000003267">
    <property type="expression patterns" value="Expressed in lung and 12 other cell types or tissues"/>
</dbReference>
<dbReference type="GO" id="GO:0005737">
    <property type="term" value="C:cytoplasm"/>
    <property type="evidence" value="ECO:0000250"/>
    <property type="project" value="UniProtKB"/>
</dbReference>
<dbReference type="GO" id="GO:0005634">
    <property type="term" value="C:nucleus"/>
    <property type="evidence" value="ECO:0000250"/>
    <property type="project" value="UniProtKB"/>
</dbReference>
<dbReference type="GO" id="GO:0005886">
    <property type="term" value="C:plasma membrane"/>
    <property type="evidence" value="ECO:0000250"/>
    <property type="project" value="UniProtKB"/>
</dbReference>
<dbReference type="GO" id="GO:0090575">
    <property type="term" value="C:RNA polymerase II transcription regulator complex"/>
    <property type="evidence" value="ECO:0000318"/>
    <property type="project" value="GO_Central"/>
</dbReference>
<dbReference type="GO" id="GO:0003677">
    <property type="term" value="F:DNA binding"/>
    <property type="evidence" value="ECO:0000250"/>
    <property type="project" value="UniProtKB"/>
</dbReference>
<dbReference type="GO" id="GO:0003700">
    <property type="term" value="F:DNA-binding transcription factor activity"/>
    <property type="evidence" value="ECO:0000250"/>
    <property type="project" value="UniProtKB"/>
</dbReference>
<dbReference type="GO" id="GO:0000981">
    <property type="term" value="F:DNA-binding transcription factor activity, RNA polymerase II-specific"/>
    <property type="evidence" value="ECO:0000250"/>
    <property type="project" value="UniProtKB"/>
</dbReference>
<dbReference type="GO" id="GO:0140297">
    <property type="term" value="F:DNA-binding transcription factor binding"/>
    <property type="evidence" value="ECO:0000250"/>
    <property type="project" value="AgBase"/>
</dbReference>
<dbReference type="GO" id="GO:0046983">
    <property type="term" value="F:protein dimerization activity"/>
    <property type="evidence" value="ECO:0000250"/>
    <property type="project" value="UniProtKB"/>
</dbReference>
<dbReference type="GO" id="GO:0042803">
    <property type="term" value="F:protein homodimerization activity"/>
    <property type="evidence" value="ECO:0000250"/>
    <property type="project" value="UniProtKB"/>
</dbReference>
<dbReference type="GO" id="GO:0019901">
    <property type="term" value="F:protein kinase binding"/>
    <property type="evidence" value="ECO:0000250"/>
    <property type="project" value="UniProtKB"/>
</dbReference>
<dbReference type="GO" id="GO:0000978">
    <property type="term" value="F:RNA polymerase II cis-regulatory region sequence-specific DNA binding"/>
    <property type="evidence" value="ECO:0000318"/>
    <property type="project" value="GO_Central"/>
</dbReference>
<dbReference type="GO" id="GO:0000976">
    <property type="term" value="F:transcription cis-regulatory region binding"/>
    <property type="evidence" value="ECO:0000250"/>
    <property type="project" value="UniProtKB"/>
</dbReference>
<dbReference type="GO" id="GO:0007259">
    <property type="term" value="P:cell surface receptor signaling pathway via JAK-STAT"/>
    <property type="evidence" value="ECO:0000318"/>
    <property type="project" value="GO_Central"/>
</dbReference>
<dbReference type="GO" id="GO:0006952">
    <property type="term" value="P:defense response"/>
    <property type="evidence" value="ECO:0000318"/>
    <property type="project" value="GO_Central"/>
</dbReference>
<dbReference type="GO" id="GO:0042755">
    <property type="term" value="P:eating behavior"/>
    <property type="evidence" value="ECO:0000250"/>
    <property type="project" value="UniProtKB"/>
</dbReference>
<dbReference type="GO" id="GO:0001754">
    <property type="term" value="P:eye photoreceptor cell differentiation"/>
    <property type="evidence" value="ECO:0000250"/>
    <property type="project" value="UniProtKB"/>
</dbReference>
<dbReference type="GO" id="GO:0042593">
    <property type="term" value="P:glucose homeostasis"/>
    <property type="evidence" value="ECO:0000250"/>
    <property type="project" value="UniProtKB"/>
</dbReference>
<dbReference type="GO" id="GO:0060397">
    <property type="term" value="P:growth hormone receptor signaling pathway via JAK-STAT"/>
    <property type="evidence" value="ECO:0000250"/>
    <property type="project" value="UniProtKB"/>
</dbReference>
<dbReference type="GO" id="GO:0070102">
    <property type="term" value="P:interleukin-6-mediated signaling pathway"/>
    <property type="evidence" value="ECO:0000250"/>
    <property type="project" value="UniProtKB"/>
</dbReference>
<dbReference type="GO" id="GO:0033210">
    <property type="term" value="P:leptin-mediated signaling pathway"/>
    <property type="evidence" value="ECO:0000318"/>
    <property type="project" value="GO_Central"/>
</dbReference>
<dbReference type="GO" id="GO:0045893">
    <property type="term" value="P:positive regulation of DNA-templated transcription"/>
    <property type="evidence" value="ECO:0000250"/>
    <property type="project" value="UniProtKB"/>
</dbReference>
<dbReference type="GO" id="GO:0045944">
    <property type="term" value="P:positive regulation of transcription by RNA polymerase II"/>
    <property type="evidence" value="ECO:0000250"/>
    <property type="project" value="UniProtKB"/>
</dbReference>
<dbReference type="GO" id="GO:0042127">
    <property type="term" value="P:regulation of cell population proliferation"/>
    <property type="evidence" value="ECO:0000318"/>
    <property type="project" value="GO_Central"/>
</dbReference>
<dbReference type="GO" id="GO:0006355">
    <property type="term" value="P:regulation of DNA-templated transcription"/>
    <property type="evidence" value="ECO:0000250"/>
    <property type="project" value="AgBase"/>
</dbReference>
<dbReference type="GO" id="GO:0040014">
    <property type="term" value="P:regulation of multicellular organism growth"/>
    <property type="evidence" value="ECO:0000250"/>
    <property type="project" value="AgBase"/>
</dbReference>
<dbReference type="GO" id="GO:0006357">
    <property type="term" value="P:regulation of transcription by RNA polymerase II"/>
    <property type="evidence" value="ECO:0000250"/>
    <property type="project" value="UniProtKB"/>
</dbReference>
<dbReference type="GO" id="GO:0043434">
    <property type="term" value="P:response to peptide hormone"/>
    <property type="evidence" value="ECO:0000318"/>
    <property type="project" value="GO_Central"/>
</dbReference>
<dbReference type="GO" id="GO:0019953">
    <property type="term" value="P:sexual reproduction"/>
    <property type="evidence" value="ECO:0000250"/>
    <property type="project" value="UniProtKB"/>
</dbReference>
<dbReference type="GO" id="GO:0001659">
    <property type="term" value="P:temperature homeostasis"/>
    <property type="evidence" value="ECO:0000250"/>
    <property type="project" value="UniProtKB"/>
</dbReference>
<dbReference type="GO" id="GO:0006366">
    <property type="term" value="P:transcription by RNA polymerase II"/>
    <property type="evidence" value="ECO:0000250"/>
    <property type="project" value="AgBase"/>
</dbReference>
<dbReference type="CDD" id="cd10374">
    <property type="entry name" value="SH2_STAT3"/>
    <property type="match status" value="1"/>
</dbReference>
<dbReference type="CDD" id="cd16853">
    <property type="entry name" value="STAT3_CCD"/>
    <property type="match status" value="1"/>
</dbReference>
<dbReference type="CDD" id="cd16847">
    <property type="entry name" value="STAT3_DBD"/>
    <property type="match status" value="1"/>
</dbReference>
<dbReference type="FunFam" id="1.10.238.10:FF:000012">
    <property type="entry name" value="Signal transducer and activator of transcription"/>
    <property type="match status" value="1"/>
</dbReference>
<dbReference type="FunFam" id="1.10.532.10:FF:000001">
    <property type="entry name" value="Signal transducer and activator of transcription"/>
    <property type="match status" value="1"/>
</dbReference>
<dbReference type="FunFam" id="1.20.1050.20:FF:000003">
    <property type="entry name" value="Signal transducer and activator of transcription"/>
    <property type="match status" value="1"/>
</dbReference>
<dbReference type="FunFam" id="3.30.505.10:FF:000003">
    <property type="entry name" value="Signal transducer and activator of transcription"/>
    <property type="match status" value="1"/>
</dbReference>
<dbReference type="FunFam" id="2.60.40.630:FF:000012">
    <property type="entry name" value="Signal transducer and activator of transcription 3"/>
    <property type="match status" value="1"/>
</dbReference>
<dbReference type="Gene3D" id="1.10.238.10">
    <property type="entry name" value="EF-hand"/>
    <property type="match status" value="1"/>
</dbReference>
<dbReference type="Gene3D" id="3.30.505.10">
    <property type="entry name" value="SH2 domain"/>
    <property type="match status" value="1"/>
</dbReference>
<dbReference type="Gene3D" id="1.20.1050.20">
    <property type="entry name" value="STAT transcription factor, all-alpha domain"/>
    <property type="match status" value="1"/>
</dbReference>
<dbReference type="Gene3D" id="2.60.40.630">
    <property type="entry name" value="STAT transcription factor, DNA-binding domain"/>
    <property type="match status" value="1"/>
</dbReference>
<dbReference type="Gene3D" id="1.10.532.10">
    <property type="entry name" value="STAT transcription factor, N-terminal domain"/>
    <property type="match status" value="1"/>
</dbReference>
<dbReference type="InterPro" id="IPR008967">
    <property type="entry name" value="p53-like_TF_DNA-bd_sf"/>
</dbReference>
<dbReference type="InterPro" id="IPR000980">
    <property type="entry name" value="SH2"/>
</dbReference>
<dbReference type="InterPro" id="IPR036860">
    <property type="entry name" value="SH2_dom_sf"/>
</dbReference>
<dbReference type="InterPro" id="IPR001217">
    <property type="entry name" value="STAT"/>
</dbReference>
<dbReference type="InterPro" id="IPR035855">
    <property type="entry name" value="STAT3_SH2"/>
</dbReference>
<dbReference type="InterPro" id="IPR048988">
    <property type="entry name" value="STAT_linker"/>
</dbReference>
<dbReference type="InterPro" id="IPR036535">
    <property type="entry name" value="STAT_N_sf"/>
</dbReference>
<dbReference type="InterPro" id="IPR013800">
    <property type="entry name" value="STAT_TF_alpha"/>
</dbReference>
<dbReference type="InterPro" id="IPR015988">
    <property type="entry name" value="STAT_TF_coiled-coil"/>
</dbReference>
<dbReference type="InterPro" id="IPR013801">
    <property type="entry name" value="STAT_TF_DNA-bd"/>
</dbReference>
<dbReference type="InterPro" id="IPR012345">
    <property type="entry name" value="STAT_TF_DNA-bd_N"/>
</dbReference>
<dbReference type="InterPro" id="IPR013799">
    <property type="entry name" value="STAT_TF_prot_interaction"/>
</dbReference>
<dbReference type="PANTHER" id="PTHR11801">
    <property type="entry name" value="SIGNAL TRANSDUCER AND ACTIVATOR OF TRANSCRIPTION"/>
    <property type="match status" value="1"/>
</dbReference>
<dbReference type="Pfam" id="PF00017">
    <property type="entry name" value="SH2"/>
    <property type="match status" value="1"/>
</dbReference>
<dbReference type="Pfam" id="PF01017">
    <property type="entry name" value="STAT_alpha"/>
    <property type="match status" value="1"/>
</dbReference>
<dbReference type="Pfam" id="PF02864">
    <property type="entry name" value="STAT_bind"/>
    <property type="match status" value="1"/>
</dbReference>
<dbReference type="Pfam" id="PF02865">
    <property type="entry name" value="STAT_int"/>
    <property type="match status" value="1"/>
</dbReference>
<dbReference type="Pfam" id="PF21354">
    <property type="entry name" value="STAT_linker"/>
    <property type="match status" value="1"/>
</dbReference>
<dbReference type="SMART" id="SM00964">
    <property type="entry name" value="STAT_int"/>
    <property type="match status" value="1"/>
</dbReference>
<dbReference type="SUPFAM" id="SSF49417">
    <property type="entry name" value="p53-like transcription factors"/>
    <property type="match status" value="1"/>
</dbReference>
<dbReference type="SUPFAM" id="SSF55550">
    <property type="entry name" value="SH2 domain"/>
    <property type="match status" value="1"/>
</dbReference>
<dbReference type="SUPFAM" id="SSF47655">
    <property type="entry name" value="STAT"/>
    <property type="match status" value="1"/>
</dbReference>
<dbReference type="SUPFAM" id="SSF48092">
    <property type="entry name" value="Transcription factor STAT-4 N-domain"/>
    <property type="match status" value="1"/>
</dbReference>
<dbReference type="PROSITE" id="PS50001">
    <property type="entry name" value="SH2"/>
    <property type="match status" value="1"/>
</dbReference>
<comment type="function">
    <text evidence="1 4">Transcription factor that binds to the interleukin-6 (IL-6)-responsive elements identified in the promoters of various acute-phase protein genes.</text>
</comment>
<comment type="subunit">
    <text evidence="1 2">Forms a homodimer or a heterodimer with a related family member, such as STAT1. Interacts with OCAD1 (By similarity).</text>
</comment>
<comment type="subcellular location">
    <subcellularLocation>
        <location>Cytoplasm</location>
    </subcellularLocation>
    <subcellularLocation>
        <location>Nucleus</location>
    </subcellularLocation>
    <text evidence="1">Shuttles between the nucleus and the cytoplasm. Constitutive nuclear presence is independent of tyrosine phosphorylation (By similarity).</text>
</comment>
<comment type="miscellaneous">
    <text>Involved in the gp130-mediated signaling pathway.</text>
</comment>
<comment type="similarity">
    <text evidence="5">Belongs to the transcription factor STAT family.</text>
</comment>
<sequence>MAQWNQLQQLDTRYLEQLHQLYSDSFPMELRQFLAPWIESQDWAYAANKESHATLVFHNLLGEIDQQYSRFLQESNVLYQHNLRRIKQFLQSRYLEKPMEIARIVARCLWEESRLLQTAATAAQQGGQATHPTAAVVTEKQQMLEQHLQDVRKRVQDLEQKMKVVENLQDDFDFNYKTLKSQGDMQDLNGNNQSVTRQKMQQLEQMLTALDQMRRGIVSELAGLLSAMEYVQKMLADEELADWKRRQQIACIGGPPNICLDRLENWITSLAESQLQTRQQIKKLEELQQKVSYKGDPIVQHRPMLEERIVELFRNLMKSAFVVERQPCMPMHPDRPLVIKTGVQFTTKVRLLVKFPELNYQLKIKVCIDKDSGDVAALRGSRKFNILGTNTKVMNMEESNNGSLSAEFKHLTLREQRCGNGGRANCDASLIVTEELHLITFETEVYHQGLKIDLETHSLPVVVISNICQMPNAWASILWYNMLTNNPKNVNFFTKPPIGTWDQVAEVLSWQFSSTTKRGLSIEQLTTLAEKLLGPGVNYSGCQITWAKFCKENMAGKGFSFWVWLDNIIDLVKKYILALWNEGYIMGFISKERERAILSTKPPGTFLLRFSESSKEGGITFTWVEKDISGKTQIQSVEPYTKQQLNSMSFAEIIMGYKIMDATNILVSPLVYLYPDIPKEEAFGKYCRSESQEHSEATDSGSAAPYLKTKFICVTPTSFSNTIDLPMSPRTLDSLMQFGNSSEGAEANAGGQFESLTFDMELTQECASSPM</sequence>
<organism>
    <name type="scientific">Gallus gallus</name>
    <name type="common">Chicken</name>
    <dbReference type="NCBI Taxonomy" id="9031"/>
    <lineage>
        <taxon>Eukaryota</taxon>
        <taxon>Metazoa</taxon>
        <taxon>Chordata</taxon>
        <taxon>Craniata</taxon>
        <taxon>Vertebrata</taxon>
        <taxon>Euteleostomi</taxon>
        <taxon>Archelosauria</taxon>
        <taxon>Archosauria</taxon>
        <taxon>Dinosauria</taxon>
        <taxon>Saurischia</taxon>
        <taxon>Theropoda</taxon>
        <taxon>Coelurosauria</taxon>
        <taxon>Aves</taxon>
        <taxon>Neognathae</taxon>
        <taxon>Galloanserae</taxon>
        <taxon>Galliformes</taxon>
        <taxon>Phasianidae</taxon>
        <taxon>Phasianinae</taxon>
        <taxon>Gallus</taxon>
    </lineage>
</organism>
<proteinExistence type="evidence at protein level"/>
<reference key="1">
    <citation type="submission" date="2004-05" db="EMBL/GenBank/DDBJ databases">
        <title>Characterization of 5' flanking sequence of chicken SOCS2 gene.</title>
        <authorList>
            <person name="Zhou G.Y."/>
            <person name="Leung F.C."/>
        </authorList>
    </citation>
    <scope>NUCLEOTIDE SEQUENCE [MRNA]</scope>
</reference>
<reference key="2">
    <citation type="journal article" date="2005" name="Genome Biol.">
        <title>Full-length cDNAs from chicken bursal lymphocytes to facilitate gene function analysis.</title>
        <authorList>
            <person name="Caldwell R.B."/>
            <person name="Kierzek A.M."/>
            <person name="Arakawa H."/>
            <person name="Bezzubov Y."/>
            <person name="Zaim J."/>
            <person name="Fiedler P."/>
            <person name="Kutter S."/>
            <person name="Blagodatski A."/>
            <person name="Kostovska D."/>
            <person name="Koter M."/>
            <person name="Plachy J."/>
            <person name="Carninci P."/>
            <person name="Hayashizaki Y."/>
            <person name="Buerstedde J.-M."/>
        </authorList>
    </citation>
    <scope>NUCLEOTIDE SEQUENCE [LARGE SCALE MRNA]</scope>
    <source>
        <strain>CB</strain>
        <tissue>Bursa of Fabricius</tissue>
    </source>
</reference>
<reference key="3">
    <citation type="journal article" date="2005" name="Vet. Immunol. Immunopathol.">
        <title>Biological activity of recombinant chicken interleukin-6 in chicken hybridoma cells.</title>
        <authorList>
            <person name="Nishimichi N."/>
            <person name="Aosasa M."/>
            <person name="Kawashima T."/>
            <person name="Horiuchi H."/>
            <person name="Furusawa S."/>
            <person name="Matsuda H."/>
        </authorList>
    </citation>
    <scope>FUNCTION</scope>
    <scope>PHOSPHORYLATION AT TYR-706</scope>
</reference>
<gene>
    <name type="primary">STAT3</name>
    <name type="ORF">RCJMB04_38l20</name>
</gene>
<keyword id="KW-0010">Activator</keyword>
<keyword id="KW-0963">Cytoplasm</keyword>
<keyword id="KW-0238">DNA-binding</keyword>
<keyword id="KW-0539">Nucleus</keyword>
<keyword id="KW-0597">Phosphoprotein</keyword>
<keyword id="KW-1185">Reference proteome</keyword>
<keyword id="KW-0727">SH2 domain</keyword>
<keyword id="KW-0804">Transcription</keyword>
<keyword id="KW-0805">Transcription regulation</keyword>
<name>STAT3_CHICK</name>
<accession>Q6DV79</accession>
<accession>Q5F331</accession>
<evidence type="ECO:0000250" key="1"/>
<evidence type="ECO:0000250" key="2">
    <source>
        <dbReference type="UniProtKB" id="P42227"/>
    </source>
</evidence>
<evidence type="ECO:0000255" key="3">
    <source>
        <dbReference type="PROSITE-ProRule" id="PRU00191"/>
    </source>
</evidence>
<evidence type="ECO:0000269" key="4">
    <source>
    </source>
</evidence>
<evidence type="ECO:0000305" key="5"/>